<gene>
    <name type="primary">ubi1</name>
    <name type="ORF">SPAC11G7.04</name>
</gene>
<comment type="function">
    <molecule>Ubiquitin</molecule>
    <text evidence="1">Exists either covalently attached to another protein, or free (unanchored). When covalently bound, it is conjugated to target proteins via an isopeptide bond either as a monomer (monoubiquitin), a polymer linked via different Lys residues of the ubiquitin (polyubiquitin chains) or a linear polymer linked via the initiator Met of the ubiquitin (linear polyubiquitin chains). Polyubiquitin chains, when attached to a target protein, have different functions depending on the Lys residue of the ubiquitin that is linked: Lys-6-linked may be involved in DNA repair; Lys-11-linked is involved in ERAD (endoplasmic reticulum-associated degradation) and in cell-cycle regulation; Lys-29-linked is involved in lysosomal degradation; Lys-33-linked is involved in kinase modification; Lys-48-linked is involved in protein degradation via the proteasome; Lys-63-linked is involved in endocytosis, and DNA-damage responses. Linear polymer chains formed via attachment by the initiator Met lead to cell signaling. Ubiquitin is usually conjugated to Lys residues of target proteins, however, in rare cases, conjugation to Cys or Ser residues has been observed. When polyubiquitin is free (unanchored-polyubiquitin), it also has distinct roles, such as in activation of protein kinases, and in signaling (By similarity).</text>
</comment>
<comment type="function">
    <molecule>Large ribosomal subunit protein eL40A</molecule>
    <text evidence="2">Component of the ribosome, a large ribonucleoprotein complex responsible for the synthesis of proteins in the cell. The small ribosomal subunit (SSU) binds messenger RNAs (mRNAs) and translates the encoded message by selecting cognate aminoacyl-transfer RNA (tRNA) molecules. The large subunit (LSU) contains the ribosomal catalytic site termed the peptidyl transferase center (PTC), which catalyzes the formation of peptide bonds, thereby polymerizing the amino acids delivered by tRNAs into a polypeptide chain. The nascent polypeptides leave the ribosome through a tunnel in the LSU and interact with protein factors that function in enzymatic processing, targeting, and the membrane insertion of nascent chains at the exit of the ribosomal tunnel. eL40 is essential for translation of a subset of cellular transcripts, including stress response transcripts, such as DDR2.</text>
</comment>
<comment type="subunit">
    <molecule>Large ribosomal subunit protein eL40A</molecule>
    <text evidence="2">Component of the large ribosomal subunit (LSU). Mature yeast ribosomes consist of a small (40S) and a large (60S) subunit. The 40S small subunit contains 1 molecule of ribosomal RNA (18S rRNA) and at least 33 different proteins. The large 60S subunit contains 3 rRNA molecules (25S, 5.8S and 5S rRNA) and at least 46 different proteins.</text>
</comment>
<comment type="subcellular location">
    <molecule>Ubiquitin</molecule>
    <subcellularLocation>
        <location evidence="1">Cytoplasm</location>
    </subcellularLocation>
    <subcellularLocation>
        <location evidence="1">Nucleus</location>
    </subcellularLocation>
</comment>
<comment type="subcellular location">
    <molecule>Large ribosomal subunit protein eL40A</molecule>
    <subcellularLocation>
        <location evidence="2">Cytoplasm</location>
    </subcellularLocation>
</comment>
<comment type="miscellaneous">
    <text>Ubiquitin is encoded by 5 different genes. Ubi1 and ubi2 are synthesized as a polyprotein with one copy of ubiquitin fused to ribosomal proteins eL40A and eL40B, respectively. Ubi3 and ubi5 are polyproteins with one copy of ubiquitin fused to ribosomal proteins eS31A and eS31B, respectively. Ubi4 is a polyprotein containing 5 exact head to tail repeats of ubiquitin.</text>
</comment>
<comment type="miscellaneous">
    <text>There are 2 genes for eL40 in S.pombe.</text>
</comment>
<comment type="similarity">
    <text evidence="4">In the N-terminal section; belongs to the ubiquitin family.</text>
</comment>
<comment type="similarity">
    <text evidence="4">In the C-terminal section; belongs to the eukaryotic ribosomal protein eL40 family.</text>
</comment>
<keyword id="KW-0963">Cytoplasm</keyword>
<keyword id="KW-1017">Isopeptide bond</keyword>
<keyword id="KW-0539">Nucleus</keyword>
<keyword id="KW-1185">Reference proteome</keyword>
<keyword id="KW-0687">Ribonucleoprotein</keyword>
<keyword id="KW-0689">Ribosomal protein</keyword>
<keyword id="KW-0832">Ubl conjugation</keyword>
<organism>
    <name type="scientific">Schizosaccharomyces pombe (strain 972 / ATCC 24843)</name>
    <name type="common">Fission yeast</name>
    <dbReference type="NCBI Taxonomy" id="284812"/>
    <lineage>
        <taxon>Eukaryota</taxon>
        <taxon>Fungi</taxon>
        <taxon>Dikarya</taxon>
        <taxon>Ascomycota</taxon>
        <taxon>Taphrinomycotina</taxon>
        <taxon>Schizosaccharomycetes</taxon>
        <taxon>Schizosaccharomycetales</taxon>
        <taxon>Schizosaccharomycetaceae</taxon>
        <taxon>Schizosaccharomyces</taxon>
    </lineage>
</organism>
<proteinExistence type="evidence at protein level"/>
<evidence type="ECO:0000250" key="1"/>
<evidence type="ECO:0000250" key="2">
    <source>
        <dbReference type="UniProtKB" id="P0CH08"/>
    </source>
</evidence>
<evidence type="ECO:0000255" key="3">
    <source>
        <dbReference type="PROSITE-ProRule" id="PRU00214"/>
    </source>
</evidence>
<evidence type="ECO:0000305" key="4"/>
<sequence length="128" mass="14595">MQIFVKTLTGKTITLEVESSDTIDNVKSKIQDKEGIPPDQQRLIFAGKQLEDGRTLSDYNIQKESTLHLVLRLRGGIIEPSLKALASKYNCEKQICRKCYARLPPRATNCRKKKCGHTNQLRPKKKLK</sequence>
<dbReference type="EMBL" id="CU329670">
    <property type="protein sequence ID" value="CAB16209.1"/>
    <property type="molecule type" value="Genomic_DNA"/>
</dbReference>
<dbReference type="PIR" id="T37547">
    <property type="entry name" value="T37547"/>
</dbReference>
<dbReference type="RefSeq" id="NP_594398.1">
    <property type="nucleotide sequence ID" value="NM_001019821.2"/>
</dbReference>
<dbReference type="SMR" id="P0CH06"/>
<dbReference type="BioGRID" id="278262">
    <property type="interactions" value="7"/>
</dbReference>
<dbReference type="BioGRID" id="278890">
    <property type="interactions" value="14"/>
</dbReference>
<dbReference type="FunCoup" id="P0CH06">
    <property type="interactions" value="738"/>
</dbReference>
<dbReference type="STRING" id="284812.P0CH06"/>
<dbReference type="iPTMnet" id="P0CH06"/>
<dbReference type="SwissPalm" id="P0CH06"/>
<dbReference type="PaxDb" id="4896-SPAC11G7.04.1"/>
<dbReference type="EnsemblFungi" id="SPAC11G7.04.1">
    <property type="protein sequence ID" value="SPAC11G7.04.1:pep"/>
    <property type="gene ID" value="SPAC11G7.04"/>
</dbReference>
<dbReference type="EnsemblFungi" id="SPAC1805.12c.1">
    <property type="protein sequence ID" value="SPAC1805.12c.1:pep"/>
    <property type="gene ID" value="SPAC1805.12c"/>
</dbReference>
<dbReference type="GeneID" id="2541768"/>
<dbReference type="KEGG" id="spo:2541768"/>
<dbReference type="KEGG" id="spo:2542428"/>
<dbReference type="PomBase" id="SPAC11G7.04">
    <property type="gene designation" value="ubi1"/>
</dbReference>
<dbReference type="VEuPathDB" id="FungiDB:SPAC11G7.04"/>
<dbReference type="VEuPathDB" id="FungiDB:SPAC1805.12c"/>
<dbReference type="eggNOG" id="KOG0003">
    <property type="taxonomic scope" value="Eukaryota"/>
</dbReference>
<dbReference type="HOGENOM" id="CLU_010412_3_4_1"/>
<dbReference type="InParanoid" id="P0CH06"/>
<dbReference type="OMA" id="CGRCSQL"/>
<dbReference type="PhylomeDB" id="P0CH06"/>
<dbReference type="PRO" id="PR:P0CH06"/>
<dbReference type="Proteomes" id="UP000002485">
    <property type="component" value="Chromosome I"/>
</dbReference>
<dbReference type="GO" id="GO:0005737">
    <property type="term" value="C:cytoplasm"/>
    <property type="evidence" value="ECO:0000318"/>
    <property type="project" value="GO_Central"/>
</dbReference>
<dbReference type="GO" id="GO:0022625">
    <property type="term" value="C:cytosolic large ribosomal subunit"/>
    <property type="evidence" value="ECO:0000266"/>
    <property type="project" value="PomBase"/>
</dbReference>
<dbReference type="GO" id="GO:0005634">
    <property type="term" value="C:nucleus"/>
    <property type="evidence" value="ECO:0000318"/>
    <property type="project" value="GO_Central"/>
</dbReference>
<dbReference type="GO" id="GO:0031386">
    <property type="term" value="F:protein tag activity"/>
    <property type="evidence" value="ECO:0000318"/>
    <property type="project" value="GO_Central"/>
</dbReference>
<dbReference type="GO" id="GO:0003735">
    <property type="term" value="F:structural constituent of ribosome"/>
    <property type="evidence" value="ECO:0000266"/>
    <property type="project" value="PomBase"/>
</dbReference>
<dbReference type="GO" id="GO:0031625">
    <property type="term" value="F:ubiquitin protein ligase binding"/>
    <property type="evidence" value="ECO:0000318"/>
    <property type="project" value="GO_Central"/>
</dbReference>
<dbReference type="GO" id="GO:0002181">
    <property type="term" value="P:cytoplasmic translation"/>
    <property type="evidence" value="ECO:0000266"/>
    <property type="project" value="PomBase"/>
</dbReference>
<dbReference type="GO" id="GO:0019941">
    <property type="term" value="P:modification-dependent protein catabolic process"/>
    <property type="evidence" value="ECO:0000318"/>
    <property type="project" value="GO_Central"/>
</dbReference>
<dbReference type="GO" id="GO:0016567">
    <property type="term" value="P:protein ubiquitination"/>
    <property type="evidence" value="ECO:0000318"/>
    <property type="project" value="GO_Central"/>
</dbReference>
<dbReference type="GO" id="GO:0042254">
    <property type="term" value="P:ribosome biogenesis"/>
    <property type="evidence" value="ECO:0000266"/>
    <property type="project" value="PomBase"/>
</dbReference>
<dbReference type="CDD" id="cd01803">
    <property type="entry name" value="Ubl_ubiquitin"/>
    <property type="match status" value="1"/>
</dbReference>
<dbReference type="FunFam" id="3.10.20.90:FF:000014">
    <property type="entry name" value="Ubiquitin-60S ribosomal L40 fusion"/>
    <property type="match status" value="1"/>
</dbReference>
<dbReference type="FunFam" id="4.10.1060.50:FF:000001">
    <property type="entry name" value="ubiquitin-60S ribosomal protein L40"/>
    <property type="match status" value="1"/>
</dbReference>
<dbReference type="Gene3D" id="4.10.1060.50">
    <property type="match status" value="1"/>
</dbReference>
<dbReference type="Gene3D" id="3.10.20.90">
    <property type="entry name" value="Phosphatidylinositol 3-kinase Catalytic Subunit, Chain A, domain 1"/>
    <property type="match status" value="1"/>
</dbReference>
<dbReference type="InterPro" id="IPR001975">
    <property type="entry name" value="Ribosomal_eL40_dom"/>
</dbReference>
<dbReference type="InterPro" id="IPR038587">
    <property type="entry name" value="Ribosomal_eL40_sf"/>
</dbReference>
<dbReference type="InterPro" id="IPR000626">
    <property type="entry name" value="Ubiquitin-like_dom"/>
</dbReference>
<dbReference type="InterPro" id="IPR029071">
    <property type="entry name" value="Ubiquitin-like_domsf"/>
</dbReference>
<dbReference type="InterPro" id="IPR019954">
    <property type="entry name" value="Ubiquitin_CS"/>
</dbReference>
<dbReference type="InterPro" id="IPR019956">
    <property type="entry name" value="Ubiquitin_dom"/>
</dbReference>
<dbReference type="InterPro" id="IPR050158">
    <property type="entry name" value="Ubiquitin_ubiquitin-like"/>
</dbReference>
<dbReference type="PANTHER" id="PTHR10666">
    <property type="entry name" value="UBIQUITIN"/>
    <property type="match status" value="1"/>
</dbReference>
<dbReference type="Pfam" id="PF01020">
    <property type="entry name" value="Ribosomal_L40e"/>
    <property type="match status" value="1"/>
</dbReference>
<dbReference type="Pfam" id="PF00240">
    <property type="entry name" value="ubiquitin"/>
    <property type="match status" value="1"/>
</dbReference>
<dbReference type="PRINTS" id="PR00348">
    <property type="entry name" value="UBIQUITIN"/>
</dbReference>
<dbReference type="SMART" id="SM01377">
    <property type="entry name" value="Ribosomal_L40e"/>
    <property type="match status" value="1"/>
</dbReference>
<dbReference type="SMART" id="SM00213">
    <property type="entry name" value="UBQ"/>
    <property type="match status" value="1"/>
</dbReference>
<dbReference type="SUPFAM" id="SSF54236">
    <property type="entry name" value="Ubiquitin-like"/>
    <property type="match status" value="1"/>
</dbReference>
<dbReference type="PROSITE" id="PS00299">
    <property type="entry name" value="UBIQUITIN_1"/>
    <property type="match status" value="1"/>
</dbReference>
<dbReference type="PROSITE" id="PS50053">
    <property type="entry name" value="UBIQUITIN_2"/>
    <property type="match status" value="1"/>
</dbReference>
<protein>
    <recommendedName>
        <fullName evidence="4">Ubiquitin-ribosomal protein eL40A fusion protein</fullName>
    </recommendedName>
    <component>
        <recommendedName>
            <fullName>Ubiquitin</fullName>
        </recommendedName>
    </component>
    <component>
        <recommendedName>
            <fullName evidence="4">Large ribosomal subunit protein eL40A</fullName>
        </recommendedName>
        <alternativeName>
            <fullName>60S ribosomal protein L40</fullName>
        </alternativeName>
        <alternativeName>
            <fullName>CEP52</fullName>
        </alternativeName>
    </component>
</protein>
<name>RL401_SCHPO</name>
<feature type="chain" id="PRO_0000114860" description="Ubiquitin">
    <location>
        <begin position="1"/>
        <end position="76"/>
    </location>
</feature>
<feature type="chain" id="PRO_0000138774" description="Large ribosomal subunit protein eL40A">
    <location>
        <begin position="77"/>
        <end position="128"/>
    </location>
</feature>
<feature type="domain" description="Ubiquitin-like" evidence="3">
    <location>
        <begin position="1"/>
        <end position="76"/>
    </location>
</feature>
<feature type="cross-link" description="Glycyl lysine isopeptide (Lys-Gly) (interchain with G-Cter in ubiquitin)">
    <location>
        <position position="6"/>
    </location>
</feature>
<feature type="cross-link" description="Glycyl lysine isopeptide (Lys-Gly) (interchain with G-Cter in ubiquitin)">
    <location>
        <position position="11"/>
    </location>
</feature>
<feature type="cross-link" description="Glycyl lysine isopeptide (Lys-Gly) (interchain with G-Cter in ubiquitin)">
    <location>
        <position position="27"/>
    </location>
</feature>
<feature type="cross-link" description="Glycyl lysine isopeptide (Lys-Gly) (interchain with G-Cter in ubiquitin)" evidence="1">
    <location>
        <position position="29"/>
    </location>
</feature>
<feature type="cross-link" description="Glycyl lysine isopeptide (Lys-Gly) (interchain with G-Cter in ubiquitin)">
    <location>
        <position position="33"/>
    </location>
</feature>
<feature type="cross-link" description="Glycyl lysine isopeptide (Lys-Gly) (interchain with G-Cter in ubiquitin)" evidence="1">
    <location>
        <position position="48"/>
    </location>
</feature>
<feature type="cross-link" description="Glycyl lysine isopeptide (Lys-Gly) (interchain with G-Cter in ubiquitin)" evidence="1">
    <location>
        <position position="63"/>
    </location>
</feature>
<feature type="cross-link" description="Glycyl lysine isopeptide (Gly-Lys) (interchain with K-? in acceptor proteins)" evidence="3">
    <location>
        <position position="76"/>
    </location>
</feature>
<reference key="1">
    <citation type="journal article" date="2002" name="Nature">
        <title>The genome sequence of Schizosaccharomyces pombe.</title>
        <authorList>
            <person name="Wood V."/>
            <person name="Gwilliam R."/>
            <person name="Rajandream M.A."/>
            <person name="Lyne M.H."/>
            <person name="Lyne R."/>
            <person name="Stewart A."/>
            <person name="Sgouros J.G."/>
            <person name="Peat N."/>
            <person name="Hayles J."/>
            <person name="Baker S.G."/>
            <person name="Basham D."/>
            <person name="Bowman S."/>
            <person name="Brooks K."/>
            <person name="Brown D."/>
            <person name="Brown S."/>
            <person name="Chillingworth T."/>
            <person name="Churcher C.M."/>
            <person name="Collins M."/>
            <person name="Connor R."/>
            <person name="Cronin A."/>
            <person name="Davis P."/>
            <person name="Feltwell T."/>
            <person name="Fraser A."/>
            <person name="Gentles S."/>
            <person name="Goble A."/>
            <person name="Hamlin N."/>
            <person name="Harris D.E."/>
            <person name="Hidalgo J."/>
            <person name="Hodgson G."/>
            <person name="Holroyd S."/>
            <person name="Hornsby T."/>
            <person name="Howarth S."/>
            <person name="Huckle E.J."/>
            <person name="Hunt S."/>
            <person name="Jagels K."/>
            <person name="James K.D."/>
            <person name="Jones L."/>
            <person name="Jones M."/>
            <person name="Leather S."/>
            <person name="McDonald S."/>
            <person name="McLean J."/>
            <person name="Mooney P."/>
            <person name="Moule S."/>
            <person name="Mungall K.L."/>
            <person name="Murphy L.D."/>
            <person name="Niblett D."/>
            <person name="Odell C."/>
            <person name="Oliver K."/>
            <person name="O'Neil S."/>
            <person name="Pearson D."/>
            <person name="Quail M.A."/>
            <person name="Rabbinowitsch E."/>
            <person name="Rutherford K.M."/>
            <person name="Rutter S."/>
            <person name="Saunders D."/>
            <person name="Seeger K."/>
            <person name="Sharp S."/>
            <person name="Skelton J."/>
            <person name="Simmonds M.N."/>
            <person name="Squares R."/>
            <person name="Squares S."/>
            <person name="Stevens K."/>
            <person name="Taylor K."/>
            <person name="Taylor R.G."/>
            <person name="Tivey A."/>
            <person name="Walsh S.V."/>
            <person name="Warren T."/>
            <person name="Whitehead S."/>
            <person name="Woodward J.R."/>
            <person name="Volckaert G."/>
            <person name="Aert R."/>
            <person name="Robben J."/>
            <person name="Grymonprez B."/>
            <person name="Weltjens I."/>
            <person name="Vanstreels E."/>
            <person name="Rieger M."/>
            <person name="Schaefer M."/>
            <person name="Mueller-Auer S."/>
            <person name="Gabel C."/>
            <person name="Fuchs M."/>
            <person name="Duesterhoeft A."/>
            <person name="Fritzc C."/>
            <person name="Holzer E."/>
            <person name="Moestl D."/>
            <person name="Hilbert H."/>
            <person name="Borzym K."/>
            <person name="Langer I."/>
            <person name="Beck A."/>
            <person name="Lehrach H."/>
            <person name="Reinhardt R."/>
            <person name="Pohl T.M."/>
            <person name="Eger P."/>
            <person name="Zimmermann W."/>
            <person name="Wedler H."/>
            <person name="Wambutt R."/>
            <person name="Purnelle B."/>
            <person name="Goffeau A."/>
            <person name="Cadieu E."/>
            <person name="Dreano S."/>
            <person name="Gloux S."/>
            <person name="Lelaure V."/>
            <person name="Mottier S."/>
            <person name="Galibert F."/>
            <person name="Aves S.J."/>
            <person name="Xiang Z."/>
            <person name="Hunt C."/>
            <person name="Moore K."/>
            <person name="Hurst S.M."/>
            <person name="Lucas M."/>
            <person name="Rochet M."/>
            <person name="Gaillardin C."/>
            <person name="Tallada V.A."/>
            <person name="Garzon A."/>
            <person name="Thode G."/>
            <person name="Daga R.R."/>
            <person name="Cruzado L."/>
            <person name="Jimenez J."/>
            <person name="Sanchez M."/>
            <person name="del Rey F."/>
            <person name="Benito J."/>
            <person name="Dominguez A."/>
            <person name="Revuelta J.L."/>
            <person name="Moreno S."/>
            <person name="Armstrong J."/>
            <person name="Forsburg S.L."/>
            <person name="Cerutti L."/>
            <person name="Lowe T."/>
            <person name="McCombie W.R."/>
            <person name="Paulsen I."/>
            <person name="Potashkin J."/>
            <person name="Shpakovski G.V."/>
            <person name="Ussery D."/>
            <person name="Barrell B.G."/>
            <person name="Nurse P."/>
        </authorList>
    </citation>
    <scope>NUCLEOTIDE SEQUENCE [LARGE SCALE GENOMIC DNA]</scope>
    <source>
        <strain>972 / ATCC 24843</strain>
    </source>
</reference>
<accession>P0CH06</accession>
<accession>O13697</accession>
<accession>O14257</accession>
<accession>P0C014</accession>
<accession>P0C015</accession>
<accession>Q76PD0</accession>
<accession>Q9HDZ4</accession>